<gene>
    <name type="primary">RIM20</name>
    <name type="ordered locus">KLLA0C07348g</name>
</gene>
<proteinExistence type="inferred from homology"/>
<name>PALA_KLULA</name>
<protein>
    <recommendedName>
        <fullName>pH-response regulator protein palA/RIM20</fullName>
    </recommendedName>
</protein>
<sequence length="652" mass="75582">MNDIFAIPFKRALQINLKDAFTVVINNTFYQTAASVEADLTQLDKYRDVLFHLDVCQADLNMLKQYYMALKAIAVKLPDDQVEFTWFNTLGLKSSGMTRNSLRFETFNVLYNIGAMYSSLAVEQRLESTEGLKESCRLFKLSAGCFKFIYEHEVSNNFKFFDEYTLNALVSMMLAQAQQMVWKKACFDDIERHSILSRLALQVALFYQTASKNSNCSPYIRTDWVKSLTSKSHYFMAIAYYRSGLHQVQKQNYAQGICDFQYALTWINKLSLDDELTEWRGEVQALLESAERDNDLIYLQASVQNPSKVKPVMMVQADLFDEIEKKDGNIFKNLLPIDVLESCNAFNERVETYVKEHISNPLESMNKLLISNTPQYMDFKSYYISEQEWNSYSDSLQDLEQLRAYVAGELKLSESILQKDIQENEQMIREHGLLRWKIPSKDKKIESLLADLTNIRNYIENGMKVDTETASLFKTLDHDLVTNVSQPPESSDPIMKEASLILQGRKNHILAAERKIIENRLLPKIVSYYKKTGSKDFEPVFQEHIRMFDGDLLQVQKEKAKNKEMLTKVTLSSPEQVQISRNDPRTLYLEELKHSSNVLSELKENIISGKQFYQDLITALESKLKEIEDYVNERKLQRTELNDTLLCDTNES</sequence>
<keyword id="KW-1185">Reference proteome</keyword>
<evidence type="ECO:0000250" key="1"/>
<evidence type="ECO:0000255" key="2">
    <source>
        <dbReference type="PROSITE-ProRule" id="PRU00526"/>
    </source>
</evidence>
<evidence type="ECO:0000305" key="3"/>
<comment type="function">
    <text evidence="1">Required for the proteolytic cleavage of the transcription factor RIM101 in response to alkaline ambient pH. May act as a scaffold protein that recruits the calpain-like protease RIM13 via VPS32 to its substrate RIM101 (By similarity).</text>
</comment>
<comment type="subunit">
    <text evidence="1">Interacts with RIM101 by binding to its two YPX[LI] motifs.</text>
</comment>
<comment type="similarity">
    <text evidence="3">Belongs to the palA/RIM20 family.</text>
</comment>
<dbReference type="EMBL" id="CR382123">
    <property type="protein sequence ID" value="CAH01377.1"/>
    <property type="molecule type" value="Genomic_DNA"/>
</dbReference>
<dbReference type="RefSeq" id="XP_452526.1">
    <property type="nucleotide sequence ID" value="XM_452526.1"/>
</dbReference>
<dbReference type="SMR" id="Q6CU63"/>
<dbReference type="FunCoup" id="Q6CU63">
    <property type="interactions" value="1228"/>
</dbReference>
<dbReference type="STRING" id="284590.Q6CU63"/>
<dbReference type="PaxDb" id="284590-Q6CU63"/>
<dbReference type="KEGG" id="kla:KLLA0_C07348g"/>
<dbReference type="eggNOG" id="KOG2220">
    <property type="taxonomic scope" value="Eukaryota"/>
</dbReference>
<dbReference type="HOGENOM" id="CLU_007181_3_1_1"/>
<dbReference type="InParanoid" id="Q6CU63"/>
<dbReference type="OMA" id="VSHAEEM"/>
<dbReference type="Proteomes" id="UP000000598">
    <property type="component" value="Chromosome C"/>
</dbReference>
<dbReference type="GO" id="GO:0005768">
    <property type="term" value="C:endosome"/>
    <property type="evidence" value="ECO:0007669"/>
    <property type="project" value="TreeGrafter"/>
</dbReference>
<dbReference type="CDD" id="cd09241">
    <property type="entry name" value="BRO1_ScRim20-like"/>
    <property type="match status" value="1"/>
</dbReference>
<dbReference type="CDD" id="cd08915">
    <property type="entry name" value="V_Alix_like"/>
    <property type="match status" value="1"/>
</dbReference>
<dbReference type="Gene3D" id="1.25.40.280">
    <property type="entry name" value="alix/aip1 like domains"/>
    <property type="match status" value="1"/>
</dbReference>
<dbReference type="InterPro" id="IPR025304">
    <property type="entry name" value="ALIX_V_dom"/>
</dbReference>
<dbReference type="InterPro" id="IPR004328">
    <property type="entry name" value="BRO1_dom"/>
</dbReference>
<dbReference type="InterPro" id="IPR038499">
    <property type="entry name" value="BRO1_sf"/>
</dbReference>
<dbReference type="PANTHER" id="PTHR23030">
    <property type="entry name" value="PCD6 INTERACTING PROTEIN-RELATED"/>
    <property type="match status" value="1"/>
</dbReference>
<dbReference type="PANTHER" id="PTHR23030:SF39">
    <property type="entry name" value="PROGRAMMED CELL DEATH 6-INTERACTING PROTEIN"/>
    <property type="match status" value="1"/>
</dbReference>
<dbReference type="Pfam" id="PF13949">
    <property type="entry name" value="ALIX_LYPXL_bnd"/>
    <property type="match status" value="1"/>
</dbReference>
<dbReference type="Pfam" id="PF03097">
    <property type="entry name" value="BRO1"/>
    <property type="match status" value="1"/>
</dbReference>
<dbReference type="SMART" id="SM01041">
    <property type="entry name" value="BRO1"/>
    <property type="match status" value="1"/>
</dbReference>
<dbReference type="PROSITE" id="PS51180">
    <property type="entry name" value="BRO1"/>
    <property type="match status" value="1"/>
</dbReference>
<feature type="chain" id="PRO_0000218880" description="pH-response regulator protein palA/RIM20">
    <location>
        <begin position="1"/>
        <end position="652"/>
    </location>
</feature>
<feature type="domain" description="BRO1" evidence="2">
    <location>
        <begin position="3"/>
        <end position="369"/>
    </location>
</feature>
<organism>
    <name type="scientific">Kluyveromyces lactis (strain ATCC 8585 / CBS 2359 / DSM 70799 / NBRC 1267 / NRRL Y-1140 / WM37)</name>
    <name type="common">Yeast</name>
    <name type="synonym">Candida sphaerica</name>
    <dbReference type="NCBI Taxonomy" id="284590"/>
    <lineage>
        <taxon>Eukaryota</taxon>
        <taxon>Fungi</taxon>
        <taxon>Dikarya</taxon>
        <taxon>Ascomycota</taxon>
        <taxon>Saccharomycotina</taxon>
        <taxon>Saccharomycetes</taxon>
        <taxon>Saccharomycetales</taxon>
        <taxon>Saccharomycetaceae</taxon>
        <taxon>Kluyveromyces</taxon>
    </lineage>
</organism>
<accession>Q6CU63</accession>
<reference key="1">
    <citation type="journal article" date="2004" name="Nature">
        <title>Genome evolution in yeasts.</title>
        <authorList>
            <person name="Dujon B."/>
            <person name="Sherman D."/>
            <person name="Fischer G."/>
            <person name="Durrens P."/>
            <person name="Casaregola S."/>
            <person name="Lafontaine I."/>
            <person name="de Montigny J."/>
            <person name="Marck C."/>
            <person name="Neuveglise C."/>
            <person name="Talla E."/>
            <person name="Goffard N."/>
            <person name="Frangeul L."/>
            <person name="Aigle M."/>
            <person name="Anthouard V."/>
            <person name="Babour A."/>
            <person name="Barbe V."/>
            <person name="Barnay S."/>
            <person name="Blanchin S."/>
            <person name="Beckerich J.-M."/>
            <person name="Beyne E."/>
            <person name="Bleykasten C."/>
            <person name="Boisrame A."/>
            <person name="Boyer J."/>
            <person name="Cattolico L."/>
            <person name="Confanioleri F."/>
            <person name="de Daruvar A."/>
            <person name="Despons L."/>
            <person name="Fabre E."/>
            <person name="Fairhead C."/>
            <person name="Ferry-Dumazet H."/>
            <person name="Groppi A."/>
            <person name="Hantraye F."/>
            <person name="Hennequin C."/>
            <person name="Jauniaux N."/>
            <person name="Joyet P."/>
            <person name="Kachouri R."/>
            <person name="Kerrest A."/>
            <person name="Koszul R."/>
            <person name="Lemaire M."/>
            <person name="Lesur I."/>
            <person name="Ma L."/>
            <person name="Muller H."/>
            <person name="Nicaud J.-M."/>
            <person name="Nikolski M."/>
            <person name="Oztas S."/>
            <person name="Ozier-Kalogeropoulos O."/>
            <person name="Pellenz S."/>
            <person name="Potier S."/>
            <person name="Richard G.-F."/>
            <person name="Straub M.-L."/>
            <person name="Suleau A."/>
            <person name="Swennen D."/>
            <person name="Tekaia F."/>
            <person name="Wesolowski-Louvel M."/>
            <person name="Westhof E."/>
            <person name="Wirth B."/>
            <person name="Zeniou-Meyer M."/>
            <person name="Zivanovic Y."/>
            <person name="Bolotin-Fukuhara M."/>
            <person name="Thierry A."/>
            <person name="Bouchier C."/>
            <person name="Caudron B."/>
            <person name="Scarpelli C."/>
            <person name="Gaillardin C."/>
            <person name="Weissenbach J."/>
            <person name="Wincker P."/>
            <person name="Souciet J.-L."/>
        </authorList>
    </citation>
    <scope>NUCLEOTIDE SEQUENCE [LARGE SCALE GENOMIC DNA]</scope>
    <source>
        <strain>ATCC 8585 / CBS 2359 / DSM 70799 / NBRC 1267 / NRRL Y-1140 / WM37</strain>
    </source>
</reference>